<evidence type="ECO:0000255" key="1">
    <source>
        <dbReference type="HAMAP-Rule" id="MF_00228"/>
    </source>
</evidence>
<dbReference type="EC" id="2.7.1.50" evidence="1"/>
<dbReference type="EMBL" id="CP000448">
    <property type="protein sequence ID" value="ABI67967.1"/>
    <property type="molecule type" value="Genomic_DNA"/>
</dbReference>
<dbReference type="RefSeq" id="WP_011640072.1">
    <property type="nucleotide sequence ID" value="NC_008346.1"/>
</dbReference>
<dbReference type="SMR" id="Q0AZ87"/>
<dbReference type="STRING" id="335541.Swol_0640"/>
<dbReference type="KEGG" id="swo:Swol_0640"/>
<dbReference type="eggNOG" id="COG2145">
    <property type="taxonomic scope" value="Bacteria"/>
</dbReference>
<dbReference type="HOGENOM" id="CLU_019943_0_0_9"/>
<dbReference type="OrthoDB" id="9778146at2"/>
<dbReference type="UniPathway" id="UPA00060">
    <property type="reaction ID" value="UER00139"/>
</dbReference>
<dbReference type="Proteomes" id="UP000001968">
    <property type="component" value="Chromosome"/>
</dbReference>
<dbReference type="GO" id="GO:0005524">
    <property type="term" value="F:ATP binding"/>
    <property type="evidence" value="ECO:0007669"/>
    <property type="project" value="UniProtKB-UniRule"/>
</dbReference>
<dbReference type="GO" id="GO:0004417">
    <property type="term" value="F:hydroxyethylthiazole kinase activity"/>
    <property type="evidence" value="ECO:0007669"/>
    <property type="project" value="UniProtKB-UniRule"/>
</dbReference>
<dbReference type="GO" id="GO:0000287">
    <property type="term" value="F:magnesium ion binding"/>
    <property type="evidence" value="ECO:0007669"/>
    <property type="project" value="UniProtKB-UniRule"/>
</dbReference>
<dbReference type="GO" id="GO:0009228">
    <property type="term" value="P:thiamine biosynthetic process"/>
    <property type="evidence" value="ECO:0007669"/>
    <property type="project" value="UniProtKB-KW"/>
</dbReference>
<dbReference type="GO" id="GO:0009229">
    <property type="term" value="P:thiamine diphosphate biosynthetic process"/>
    <property type="evidence" value="ECO:0007669"/>
    <property type="project" value="UniProtKB-UniRule"/>
</dbReference>
<dbReference type="CDD" id="cd01170">
    <property type="entry name" value="THZ_kinase"/>
    <property type="match status" value="1"/>
</dbReference>
<dbReference type="Gene3D" id="3.40.1190.20">
    <property type="match status" value="1"/>
</dbReference>
<dbReference type="HAMAP" id="MF_00228">
    <property type="entry name" value="Thz_kinase"/>
    <property type="match status" value="1"/>
</dbReference>
<dbReference type="InterPro" id="IPR000417">
    <property type="entry name" value="Hyethyz_kinase"/>
</dbReference>
<dbReference type="InterPro" id="IPR029056">
    <property type="entry name" value="Ribokinase-like"/>
</dbReference>
<dbReference type="NCBIfam" id="NF006830">
    <property type="entry name" value="PRK09355.1"/>
    <property type="match status" value="1"/>
</dbReference>
<dbReference type="Pfam" id="PF02110">
    <property type="entry name" value="HK"/>
    <property type="match status" value="1"/>
</dbReference>
<dbReference type="PIRSF" id="PIRSF000513">
    <property type="entry name" value="Thz_kinase"/>
    <property type="match status" value="1"/>
</dbReference>
<dbReference type="PRINTS" id="PR01099">
    <property type="entry name" value="HYETHTZKNASE"/>
</dbReference>
<dbReference type="SUPFAM" id="SSF53613">
    <property type="entry name" value="Ribokinase-like"/>
    <property type="match status" value="1"/>
</dbReference>
<gene>
    <name evidence="1" type="primary">thiM</name>
    <name type="ordered locus">Swol_0640</name>
</gene>
<reference key="1">
    <citation type="journal article" date="2010" name="Environ. Microbiol.">
        <title>The genome of Syntrophomonas wolfei: new insights into syntrophic metabolism and biohydrogen production.</title>
        <authorList>
            <person name="Sieber J.R."/>
            <person name="Sims D.R."/>
            <person name="Han C."/>
            <person name="Kim E."/>
            <person name="Lykidis A."/>
            <person name="Lapidus A.L."/>
            <person name="McDonnald E."/>
            <person name="Rohlin L."/>
            <person name="Culley D.E."/>
            <person name="Gunsalus R."/>
            <person name="McInerney M.J."/>
        </authorList>
    </citation>
    <scope>NUCLEOTIDE SEQUENCE [LARGE SCALE GENOMIC DNA]</scope>
    <source>
        <strain>DSM 2245B / Goettingen</strain>
    </source>
</reference>
<accession>Q0AZ87</accession>
<organism>
    <name type="scientific">Syntrophomonas wolfei subsp. wolfei (strain DSM 2245B / Goettingen)</name>
    <dbReference type="NCBI Taxonomy" id="335541"/>
    <lineage>
        <taxon>Bacteria</taxon>
        <taxon>Bacillati</taxon>
        <taxon>Bacillota</taxon>
        <taxon>Clostridia</taxon>
        <taxon>Eubacteriales</taxon>
        <taxon>Syntrophomonadaceae</taxon>
        <taxon>Syntrophomonas</taxon>
    </lineage>
</organism>
<name>THIM_SYNWW</name>
<proteinExistence type="inferred from homology"/>
<comment type="function">
    <text evidence="1">Catalyzes the phosphorylation of the hydroxyl group of 4-methyl-5-beta-hydroxyethylthiazole (THZ).</text>
</comment>
<comment type="catalytic activity">
    <reaction evidence="1">
        <text>5-(2-hydroxyethyl)-4-methylthiazole + ATP = 4-methyl-5-(2-phosphooxyethyl)-thiazole + ADP + H(+)</text>
        <dbReference type="Rhea" id="RHEA:24212"/>
        <dbReference type="ChEBI" id="CHEBI:15378"/>
        <dbReference type="ChEBI" id="CHEBI:17957"/>
        <dbReference type="ChEBI" id="CHEBI:30616"/>
        <dbReference type="ChEBI" id="CHEBI:58296"/>
        <dbReference type="ChEBI" id="CHEBI:456216"/>
        <dbReference type="EC" id="2.7.1.50"/>
    </reaction>
</comment>
<comment type="cofactor">
    <cofactor evidence="1">
        <name>Mg(2+)</name>
        <dbReference type="ChEBI" id="CHEBI:18420"/>
    </cofactor>
</comment>
<comment type="pathway">
    <text evidence="1">Cofactor biosynthesis; thiamine diphosphate biosynthesis; 4-methyl-5-(2-phosphoethyl)-thiazole from 5-(2-hydroxyethyl)-4-methylthiazole: step 1/1.</text>
</comment>
<comment type="similarity">
    <text evidence="1">Belongs to the Thz kinase family.</text>
</comment>
<keyword id="KW-0067">ATP-binding</keyword>
<keyword id="KW-0418">Kinase</keyword>
<keyword id="KW-0460">Magnesium</keyword>
<keyword id="KW-0479">Metal-binding</keyword>
<keyword id="KW-0547">Nucleotide-binding</keyword>
<keyword id="KW-1185">Reference proteome</keyword>
<keyword id="KW-0784">Thiamine biosynthesis</keyword>
<keyword id="KW-0808">Transferase</keyword>
<sequence length="266" mass="28278">MLKYCAEIWDEVRNRRPLVHCITNYVTVNDVANIILAAGASPAMVEYPAEASGFAPLASVLYFNLGTLTGEQEAAMLEGRWAAASRDVPLILDPVACGVIGRKVDLIERIKSLGKIQVLKGNIAEIKSLAGLAGKAQGVDSLDTGEGLEEACLQLAVKDKLIAVATGEVDIVAEENRYARIFNGTPLFQNITGAGCMAGGVIAACVGAAPEEAWLASITGLLAFNLAGERAASQAGNRPGTFRTLLFDELFVLRGEELMKEGRLEW</sequence>
<protein>
    <recommendedName>
        <fullName evidence="1">Hydroxyethylthiazole kinase</fullName>
        <ecNumber evidence="1">2.7.1.50</ecNumber>
    </recommendedName>
    <alternativeName>
        <fullName evidence="1">4-methyl-5-beta-hydroxyethylthiazole kinase</fullName>
        <shortName evidence="1">TH kinase</shortName>
        <shortName evidence="1">Thz kinase</shortName>
    </alternativeName>
</protein>
<feature type="chain" id="PRO_0000336573" description="Hydroxyethylthiazole kinase">
    <location>
        <begin position="1"/>
        <end position="266"/>
    </location>
</feature>
<feature type="binding site" evidence="1">
    <location>
        <position position="44"/>
    </location>
    <ligand>
        <name>substrate</name>
    </ligand>
</feature>
<feature type="binding site" evidence="1">
    <location>
        <position position="120"/>
    </location>
    <ligand>
        <name>ATP</name>
        <dbReference type="ChEBI" id="CHEBI:30616"/>
    </ligand>
</feature>
<feature type="binding site" evidence="1">
    <location>
        <position position="166"/>
    </location>
    <ligand>
        <name>ATP</name>
        <dbReference type="ChEBI" id="CHEBI:30616"/>
    </ligand>
</feature>
<feature type="binding site" evidence="1">
    <location>
        <position position="193"/>
    </location>
    <ligand>
        <name>substrate</name>
    </ligand>
</feature>